<sequence>MAKPAEKKTKKKIKRVITDGVAHVHASFNNTIVTITDRQGNALSWATSGGAGFRGSRKSTPFAAQVAAEKAGRAALDYGVKSLEVRIKGPGPGRESAVRSLNNVGYKITNIIDVTPIPHNGCRPPKKRRV</sequence>
<protein>
    <recommendedName>
        <fullName evidence="1">Small ribosomal subunit protein uS11</fullName>
    </recommendedName>
    <alternativeName>
        <fullName evidence="2">30S ribosomal protein S11</fullName>
    </alternativeName>
</protein>
<evidence type="ECO:0000255" key="1">
    <source>
        <dbReference type="HAMAP-Rule" id="MF_01310"/>
    </source>
</evidence>
<evidence type="ECO:0000305" key="2"/>
<name>RS11_XANAC</name>
<proteinExistence type="inferred from homology"/>
<feature type="chain" id="PRO_0000123259" description="Small ribosomal subunit protein uS11">
    <location>
        <begin position="1"/>
        <end position="130"/>
    </location>
</feature>
<comment type="function">
    <text evidence="1">Located on the platform of the 30S subunit, it bridges several disparate RNA helices of the 16S rRNA. Forms part of the Shine-Dalgarno cleft in the 70S ribosome.</text>
</comment>
<comment type="subunit">
    <text evidence="1">Part of the 30S ribosomal subunit. Interacts with proteins S7 and S18. Binds to IF-3.</text>
</comment>
<comment type="similarity">
    <text evidence="1">Belongs to the universal ribosomal protein uS11 family.</text>
</comment>
<organism>
    <name type="scientific">Xanthomonas axonopodis pv. citri (strain 306)</name>
    <dbReference type="NCBI Taxonomy" id="190486"/>
    <lineage>
        <taxon>Bacteria</taxon>
        <taxon>Pseudomonadati</taxon>
        <taxon>Pseudomonadota</taxon>
        <taxon>Gammaproteobacteria</taxon>
        <taxon>Lysobacterales</taxon>
        <taxon>Lysobacteraceae</taxon>
        <taxon>Xanthomonas</taxon>
    </lineage>
</organism>
<accession>P0A0X3</accession>
<accession>Q9Z3E9</accession>
<dbReference type="EMBL" id="AE008923">
    <property type="protein sequence ID" value="AAM35877.1"/>
    <property type="molecule type" value="Genomic_DNA"/>
</dbReference>
<dbReference type="RefSeq" id="WP_003486671.1">
    <property type="nucleotide sequence ID" value="NC_003919.1"/>
</dbReference>
<dbReference type="SMR" id="P0A0X3"/>
<dbReference type="GeneID" id="97509358"/>
<dbReference type="KEGG" id="xac:XAC0994"/>
<dbReference type="eggNOG" id="COG0100">
    <property type="taxonomic scope" value="Bacteria"/>
</dbReference>
<dbReference type="HOGENOM" id="CLU_072439_5_0_6"/>
<dbReference type="Proteomes" id="UP000000576">
    <property type="component" value="Chromosome"/>
</dbReference>
<dbReference type="GO" id="GO:1990904">
    <property type="term" value="C:ribonucleoprotein complex"/>
    <property type="evidence" value="ECO:0007669"/>
    <property type="project" value="UniProtKB-KW"/>
</dbReference>
<dbReference type="GO" id="GO:0005840">
    <property type="term" value="C:ribosome"/>
    <property type="evidence" value="ECO:0007669"/>
    <property type="project" value="UniProtKB-KW"/>
</dbReference>
<dbReference type="GO" id="GO:0019843">
    <property type="term" value="F:rRNA binding"/>
    <property type="evidence" value="ECO:0007669"/>
    <property type="project" value="UniProtKB-UniRule"/>
</dbReference>
<dbReference type="GO" id="GO:0003735">
    <property type="term" value="F:structural constituent of ribosome"/>
    <property type="evidence" value="ECO:0007669"/>
    <property type="project" value="InterPro"/>
</dbReference>
<dbReference type="GO" id="GO:0006412">
    <property type="term" value="P:translation"/>
    <property type="evidence" value="ECO:0007669"/>
    <property type="project" value="UniProtKB-UniRule"/>
</dbReference>
<dbReference type="FunFam" id="3.30.420.80:FF:000001">
    <property type="entry name" value="30S ribosomal protein S11"/>
    <property type="match status" value="1"/>
</dbReference>
<dbReference type="Gene3D" id="3.30.420.80">
    <property type="entry name" value="Ribosomal protein S11"/>
    <property type="match status" value="1"/>
</dbReference>
<dbReference type="HAMAP" id="MF_01310">
    <property type="entry name" value="Ribosomal_uS11"/>
    <property type="match status" value="1"/>
</dbReference>
<dbReference type="InterPro" id="IPR001971">
    <property type="entry name" value="Ribosomal_uS11"/>
</dbReference>
<dbReference type="InterPro" id="IPR019981">
    <property type="entry name" value="Ribosomal_uS11_bac-type"/>
</dbReference>
<dbReference type="InterPro" id="IPR018102">
    <property type="entry name" value="Ribosomal_uS11_CS"/>
</dbReference>
<dbReference type="InterPro" id="IPR036967">
    <property type="entry name" value="Ribosomal_uS11_sf"/>
</dbReference>
<dbReference type="NCBIfam" id="NF003698">
    <property type="entry name" value="PRK05309.1"/>
    <property type="match status" value="1"/>
</dbReference>
<dbReference type="NCBIfam" id="TIGR03632">
    <property type="entry name" value="uS11_bact"/>
    <property type="match status" value="1"/>
</dbReference>
<dbReference type="PANTHER" id="PTHR11759">
    <property type="entry name" value="40S RIBOSOMAL PROTEIN S14/30S RIBOSOMAL PROTEIN S11"/>
    <property type="match status" value="1"/>
</dbReference>
<dbReference type="Pfam" id="PF00411">
    <property type="entry name" value="Ribosomal_S11"/>
    <property type="match status" value="1"/>
</dbReference>
<dbReference type="PIRSF" id="PIRSF002131">
    <property type="entry name" value="Ribosomal_S11"/>
    <property type="match status" value="1"/>
</dbReference>
<dbReference type="SUPFAM" id="SSF53137">
    <property type="entry name" value="Translational machinery components"/>
    <property type="match status" value="1"/>
</dbReference>
<dbReference type="PROSITE" id="PS00054">
    <property type="entry name" value="RIBOSOMAL_S11"/>
    <property type="match status" value="1"/>
</dbReference>
<keyword id="KW-0687">Ribonucleoprotein</keyword>
<keyword id="KW-0689">Ribosomal protein</keyword>
<keyword id="KW-0694">RNA-binding</keyword>
<keyword id="KW-0699">rRNA-binding</keyword>
<gene>
    <name evidence="1" type="primary">rpsK</name>
    <name type="ordered locus">XAC0994</name>
</gene>
<reference key="1">
    <citation type="journal article" date="2002" name="Nature">
        <title>Comparison of the genomes of two Xanthomonas pathogens with differing host specificities.</title>
        <authorList>
            <person name="da Silva A.C.R."/>
            <person name="Ferro J.A."/>
            <person name="Reinach F.C."/>
            <person name="Farah C.S."/>
            <person name="Furlan L.R."/>
            <person name="Quaggio R.B."/>
            <person name="Monteiro-Vitorello C.B."/>
            <person name="Van Sluys M.A."/>
            <person name="Almeida N.F. Jr."/>
            <person name="Alves L.M.C."/>
            <person name="do Amaral A.M."/>
            <person name="Bertolini M.C."/>
            <person name="Camargo L.E.A."/>
            <person name="Camarotte G."/>
            <person name="Cannavan F."/>
            <person name="Cardozo J."/>
            <person name="Chambergo F."/>
            <person name="Ciapina L.P."/>
            <person name="Cicarelli R.M.B."/>
            <person name="Coutinho L.L."/>
            <person name="Cursino-Santos J.R."/>
            <person name="El-Dorry H."/>
            <person name="Faria J.B."/>
            <person name="Ferreira A.J.S."/>
            <person name="Ferreira R.C.C."/>
            <person name="Ferro M.I.T."/>
            <person name="Formighieri E.F."/>
            <person name="Franco M.C."/>
            <person name="Greggio C.C."/>
            <person name="Gruber A."/>
            <person name="Katsuyama A.M."/>
            <person name="Kishi L.T."/>
            <person name="Leite R.P."/>
            <person name="Lemos E.G.M."/>
            <person name="Lemos M.V.F."/>
            <person name="Locali E.C."/>
            <person name="Machado M.A."/>
            <person name="Madeira A.M.B.N."/>
            <person name="Martinez-Rossi N.M."/>
            <person name="Martins E.C."/>
            <person name="Meidanis J."/>
            <person name="Menck C.F.M."/>
            <person name="Miyaki C.Y."/>
            <person name="Moon D.H."/>
            <person name="Moreira L.M."/>
            <person name="Novo M.T.M."/>
            <person name="Okura V.K."/>
            <person name="Oliveira M.C."/>
            <person name="Oliveira V.R."/>
            <person name="Pereira H.A."/>
            <person name="Rossi A."/>
            <person name="Sena J.A.D."/>
            <person name="Silva C."/>
            <person name="de Souza R.F."/>
            <person name="Spinola L.A.F."/>
            <person name="Takita M.A."/>
            <person name="Tamura R.E."/>
            <person name="Teixeira E.C."/>
            <person name="Tezza R.I.D."/>
            <person name="Trindade dos Santos M."/>
            <person name="Truffi D."/>
            <person name="Tsai S.M."/>
            <person name="White F.F."/>
            <person name="Setubal J.C."/>
            <person name="Kitajima J.P."/>
        </authorList>
    </citation>
    <scope>NUCLEOTIDE SEQUENCE [LARGE SCALE GENOMIC DNA]</scope>
    <source>
        <strain>306</strain>
    </source>
</reference>